<proteinExistence type="predicted"/>
<keyword id="KW-1185">Reference proteome</keyword>
<gene>
    <name type="ordered locus">AF_2230</name>
</gene>
<reference key="1">
    <citation type="journal article" date="1997" name="Nature">
        <title>The complete genome sequence of the hyperthermophilic, sulphate-reducing archaeon Archaeoglobus fulgidus.</title>
        <authorList>
            <person name="Klenk H.-P."/>
            <person name="Clayton R.A."/>
            <person name="Tomb J.-F."/>
            <person name="White O."/>
            <person name="Nelson K.E."/>
            <person name="Ketchum K.A."/>
            <person name="Dodson R.J."/>
            <person name="Gwinn M.L."/>
            <person name="Hickey E.K."/>
            <person name="Peterson J.D."/>
            <person name="Richardson D.L."/>
            <person name="Kerlavage A.R."/>
            <person name="Graham D.E."/>
            <person name="Kyrpides N.C."/>
            <person name="Fleischmann R.D."/>
            <person name="Quackenbush J."/>
            <person name="Lee N.H."/>
            <person name="Sutton G.G."/>
            <person name="Gill S.R."/>
            <person name="Kirkness E.F."/>
            <person name="Dougherty B.A."/>
            <person name="McKenney K."/>
            <person name="Adams M.D."/>
            <person name="Loftus B.J."/>
            <person name="Peterson S.N."/>
            <person name="Reich C.I."/>
            <person name="McNeil L.K."/>
            <person name="Badger J.H."/>
            <person name="Glodek A."/>
            <person name="Zhou L."/>
            <person name="Overbeek R."/>
            <person name="Gocayne J.D."/>
            <person name="Weidman J.F."/>
            <person name="McDonald L.A."/>
            <person name="Utterback T.R."/>
            <person name="Cotton M.D."/>
            <person name="Spriggs T."/>
            <person name="Artiach P."/>
            <person name="Kaine B.P."/>
            <person name="Sykes S.M."/>
            <person name="Sadow P.W."/>
            <person name="D'Andrea K.P."/>
            <person name="Bowman C."/>
            <person name="Fujii C."/>
            <person name="Garland S.A."/>
            <person name="Mason T.M."/>
            <person name="Olsen G.J."/>
            <person name="Fraser C.M."/>
            <person name="Smith H.O."/>
            <person name="Woese C.R."/>
            <person name="Venter J.C."/>
        </authorList>
    </citation>
    <scope>NUCLEOTIDE SEQUENCE [LARGE SCALE GENOMIC DNA]</scope>
    <source>
        <strain>ATCC 49558 / DSM 4304 / JCM 9628 / NBRC 100126 / VC-16</strain>
    </source>
</reference>
<sequence length="88" mass="10081">MDEFEYAIFEEEDEEVEGEDDVKLAEIYKLASKLLKLLDEIKSFELKESASLMLIKEIVGDDKVLVGLATKMLQDMSYGFDDDESYVS</sequence>
<protein>
    <recommendedName>
        <fullName>Uncharacterized protein AF_2230</fullName>
    </recommendedName>
</protein>
<dbReference type="EMBL" id="AE000782">
    <property type="protein sequence ID" value="AAB89029.1"/>
    <property type="molecule type" value="Genomic_DNA"/>
</dbReference>
<dbReference type="PIR" id="F69528">
    <property type="entry name" value="F69528"/>
</dbReference>
<dbReference type="RefSeq" id="WP_010879719.1">
    <property type="nucleotide sequence ID" value="NC_000917.1"/>
</dbReference>
<dbReference type="SMR" id="O28053"/>
<dbReference type="PaxDb" id="224325-AF_2230"/>
<dbReference type="EnsemblBacteria" id="AAB89029">
    <property type="protein sequence ID" value="AAB89029"/>
    <property type="gene ID" value="AF_2230"/>
</dbReference>
<dbReference type="KEGG" id="afu:AF_2230"/>
<dbReference type="eggNOG" id="arCOG10235">
    <property type="taxonomic scope" value="Archaea"/>
</dbReference>
<dbReference type="HOGENOM" id="CLU_2461592_0_0_2"/>
<dbReference type="OrthoDB" id="51523at2157"/>
<dbReference type="Proteomes" id="UP000002199">
    <property type="component" value="Chromosome"/>
</dbReference>
<organism>
    <name type="scientific">Archaeoglobus fulgidus (strain ATCC 49558 / DSM 4304 / JCM 9628 / NBRC 100126 / VC-16)</name>
    <dbReference type="NCBI Taxonomy" id="224325"/>
    <lineage>
        <taxon>Archaea</taxon>
        <taxon>Methanobacteriati</taxon>
        <taxon>Methanobacteriota</taxon>
        <taxon>Archaeoglobi</taxon>
        <taxon>Archaeoglobales</taxon>
        <taxon>Archaeoglobaceae</taxon>
        <taxon>Archaeoglobus</taxon>
    </lineage>
</organism>
<name>Y2230_ARCFU</name>
<feature type="chain" id="PRO_0000128124" description="Uncharacterized protein AF_2230">
    <location>
        <begin position="1"/>
        <end position="88"/>
    </location>
</feature>
<accession>O28053</accession>